<dbReference type="EMBL" id="CP001176">
    <property type="protein sequence ID" value="ACK58994.1"/>
    <property type="molecule type" value="Genomic_DNA"/>
</dbReference>
<dbReference type="RefSeq" id="WP_000869148.1">
    <property type="nucleotide sequence ID" value="NZ_VEHB01000003.1"/>
</dbReference>
<dbReference type="SMR" id="B7HH58"/>
<dbReference type="KEGG" id="bcb:BCB4264_A1354"/>
<dbReference type="HOGENOM" id="CLU_023081_1_0_9"/>
<dbReference type="Proteomes" id="UP000007096">
    <property type="component" value="Chromosome"/>
</dbReference>
<dbReference type="GO" id="GO:0005829">
    <property type="term" value="C:cytosol"/>
    <property type="evidence" value="ECO:0007669"/>
    <property type="project" value="TreeGrafter"/>
</dbReference>
<dbReference type="GO" id="GO:0016491">
    <property type="term" value="F:oxidoreductase activity"/>
    <property type="evidence" value="ECO:0007669"/>
    <property type="project" value="UniProtKB-ARBA"/>
</dbReference>
<dbReference type="GO" id="GO:0006089">
    <property type="term" value="P:lactate metabolic process"/>
    <property type="evidence" value="ECO:0007669"/>
    <property type="project" value="UniProtKB-UniRule"/>
</dbReference>
<dbReference type="HAMAP" id="MF_02105">
    <property type="entry name" value="LutA"/>
    <property type="match status" value="1"/>
</dbReference>
<dbReference type="InterPro" id="IPR004017">
    <property type="entry name" value="Cys_rich_dom"/>
</dbReference>
<dbReference type="InterPro" id="IPR022822">
    <property type="entry name" value="LutA"/>
</dbReference>
<dbReference type="PANTHER" id="PTHR30296:SF0">
    <property type="entry name" value="LACTATE UTILIZATION PROTEIN A"/>
    <property type="match status" value="1"/>
</dbReference>
<dbReference type="PANTHER" id="PTHR30296">
    <property type="entry name" value="UNCHARACTERIZED PROTEIN YKGE"/>
    <property type="match status" value="1"/>
</dbReference>
<dbReference type="Pfam" id="PF02754">
    <property type="entry name" value="CCG"/>
    <property type="match status" value="2"/>
</dbReference>
<gene>
    <name evidence="1" type="primary">lutA</name>
    <name type="ordered locus">BCB4264_A1354</name>
</gene>
<comment type="function">
    <text evidence="1">Is involved in L-lactate degradation and allows cells to grow with lactate as the sole carbon source.</text>
</comment>
<comment type="similarity">
    <text evidence="1">Belongs to the LutA/YkgE family.</text>
</comment>
<name>LUTA_BACC4</name>
<organism>
    <name type="scientific">Bacillus cereus (strain B4264)</name>
    <dbReference type="NCBI Taxonomy" id="405532"/>
    <lineage>
        <taxon>Bacteria</taxon>
        <taxon>Bacillati</taxon>
        <taxon>Bacillota</taxon>
        <taxon>Bacilli</taxon>
        <taxon>Bacillales</taxon>
        <taxon>Bacillaceae</taxon>
        <taxon>Bacillus</taxon>
        <taxon>Bacillus cereus group</taxon>
    </lineage>
</organism>
<proteinExistence type="inferred from homology"/>
<protein>
    <recommendedName>
        <fullName evidence="1">Lactate utilization protein A</fullName>
    </recommendedName>
</protein>
<accession>B7HH58</accession>
<evidence type="ECO:0000255" key="1">
    <source>
        <dbReference type="HAMAP-Rule" id="MF_02105"/>
    </source>
</evidence>
<sequence>MKVTLFVTCLVDMFETNVGKATVEVLERLGCEIEFPEAQVCCGQPAYNSGHVEAAKEAMKHMIETFEDAEYIVTPSGSCATMFHEYPHVFKDDPKWAKRAQKVADKTYEFTQFIVDVLKVTDVGASLPGIATIHKSCHMTRMLGVKEAPGILLSNVKGLTVRDLPNVQNCCGFGGTFSVKMTPISEQMVDEKVDSVMETGADYLIGADCGCLLNIGGRIERLGKEVKVMHIAEVLNSRS</sequence>
<reference key="1">
    <citation type="submission" date="2008-10" db="EMBL/GenBank/DDBJ databases">
        <title>Genome sequence of Bacillus cereus B4264.</title>
        <authorList>
            <person name="Dodson R.J."/>
            <person name="Durkin A.S."/>
            <person name="Rosovitz M.J."/>
            <person name="Rasko D.A."/>
            <person name="Hoffmaster A."/>
            <person name="Ravel J."/>
            <person name="Sutton G."/>
        </authorList>
    </citation>
    <scope>NUCLEOTIDE SEQUENCE [LARGE SCALE GENOMIC DNA]</scope>
    <source>
        <strain>B4264</strain>
    </source>
</reference>
<feature type="chain" id="PRO_0000384031" description="Lactate utilization protein A">
    <location>
        <begin position="1"/>
        <end position="239"/>
    </location>
</feature>